<reference key="1">
    <citation type="submission" date="2008-01" db="EMBL/GenBank/DDBJ databases">
        <title>Complete sequence of Shewanella halifaxensis HAW-EB4.</title>
        <authorList>
            <consortium name="US DOE Joint Genome Institute"/>
            <person name="Copeland A."/>
            <person name="Lucas S."/>
            <person name="Lapidus A."/>
            <person name="Glavina del Rio T."/>
            <person name="Dalin E."/>
            <person name="Tice H."/>
            <person name="Bruce D."/>
            <person name="Goodwin L."/>
            <person name="Pitluck S."/>
            <person name="Sims D."/>
            <person name="Brettin T."/>
            <person name="Detter J.C."/>
            <person name="Han C."/>
            <person name="Kuske C.R."/>
            <person name="Schmutz J."/>
            <person name="Larimer F."/>
            <person name="Land M."/>
            <person name="Hauser L."/>
            <person name="Kyrpides N."/>
            <person name="Kim E."/>
            <person name="Zhao J.-S."/>
            <person name="Richardson P."/>
        </authorList>
    </citation>
    <scope>NUCLEOTIDE SEQUENCE [LARGE SCALE GENOMIC DNA]</scope>
    <source>
        <strain>HAW-EB4</strain>
    </source>
</reference>
<comment type="function">
    <text evidence="1">Catalyzes the attachment of serine to tRNA(Ser). Is also able to aminoacylate tRNA(Sec) with serine, to form the misacylated tRNA L-seryl-tRNA(Sec), which will be further converted into selenocysteinyl-tRNA(Sec).</text>
</comment>
<comment type="catalytic activity">
    <reaction evidence="1">
        <text>tRNA(Ser) + L-serine + ATP = L-seryl-tRNA(Ser) + AMP + diphosphate + H(+)</text>
        <dbReference type="Rhea" id="RHEA:12292"/>
        <dbReference type="Rhea" id="RHEA-COMP:9669"/>
        <dbReference type="Rhea" id="RHEA-COMP:9703"/>
        <dbReference type="ChEBI" id="CHEBI:15378"/>
        <dbReference type="ChEBI" id="CHEBI:30616"/>
        <dbReference type="ChEBI" id="CHEBI:33019"/>
        <dbReference type="ChEBI" id="CHEBI:33384"/>
        <dbReference type="ChEBI" id="CHEBI:78442"/>
        <dbReference type="ChEBI" id="CHEBI:78533"/>
        <dbReference type="ChEBI" id="CHEBI:456215"/>
        <dbReference type="EC" id="6.1.1.11"/>
    </reaction>
</comment>
<comment type="catalytic activity">
    <reaction evidence="1">
        <text>tRNA(Sec) + L-serine + ATP = L-seryl-tRNA(Sec) + AMP + diphosphate + H(+)</text>
        <dbReference type="Rhea" id="RHEA:42580"/>
        <dbReference type="Rhea" id="RHEA-COMP:9742"/>
        <dbReference type="Rhea" id="RHEA-COMP:10128"/>
        <dbReference type="ChEBI" id="CHEBI:15378"/>
        <dbReference type="ChEBI" id="CHEBI:30616"/>
        <dbReference type="ChEBI" id="CHEBI:33019"/>
        <dbReference type="ChEBI" id="CHEBI:33384"/>
        <dbReference type="ChEBI" id="CHEBI:78442"/>
        <dbReference type="ChEBI" id="CHEBI:78533"/>
        <dbReference type="ChEBI" id="CHEBI:456215"/>
        <dbReference type="EC" id="6.1.1.11"/>
    </reaction>
</comment>
<comment type="pathway">
    <text evidence="1">Aminoacyl-tRNA biosynthesis; selenocysteinyl-tRNA(Sec) biosynthesis; L-seryl-tRNA(Sec) from L-serine and tRNA(Sec): step 1/1.</text>
</comment>
<comment type="subunit">
    <text evidence="1">Homodimer. The tRNA molecule binds across the dimer.</text>
</comment>
<comment type="subcellular location">
    <subcellularLocation>
        <location evidence="1">Cytoplasm</location>
    </subcellularLocation>
</comment>
<comment type="domain">
    <text evidence="1">Consists of two distinct domains, a catalytic core and a N-terminal extension that is involved in tRNA binding.</text>
</comment>
<comment type="similarity">
    <text evidence="1">Belongs to the class-II aminoacyl-tRNA synthetase family. Type-1 seryl-tRNA synthetase subfamily.</text>
</comment>
<gene>
    <name evidence="1" type="primary">serS</name>
    <name type="ordered locus">Shal_2213</name>
</gene>
<dbReference type="EC" id="6.1.1.11" evidence="1"/>
<dbReference type="EMBL" id="CP000931">
    <property type="protein sequence ID" value="ABZ76772.1"/>
    <property type="molecule type" value="Genomic_DNA"/>
</dbReference>
<dbReference type="RefSeq" id="WP_012277302.1">
    <property type="nucleotide sequence ID" value="NC_010334.1"/>
</dbReference>
<dbReference type="SMR" id="B0TUP4"/>
<dbReference type="STRING" id="458817.Shal_2213"/>
<dbReference type="KEGG" id="shl:Shal_2213"/>
<dbReference type="eggNOG" id="COG0172">
    <property type="taxonomic scope" value="Bacteria"/>
</dbReference>
<dbReference type="HOGENOM" id="CLU_023797_1_1_6"/>
<dbReference type="OrthoDB" id="9804647at2"/>
<dbReference type="UniPathway" id="UPA00906">
    <property type="reaction ID" value="UER00895"/>
</dbReference>
<dbReference type="Proteomes" id="UP000001317">
    <property type="component" value="Chromosome"/>
</dbReference>
<dbReference type="GO" id="GO:0005737">
    <property type="term" value="C:cytoplasm"/>
    <property type="evidence" value="ECO:0007669"/>
    <property type="project" value="UniProtKB-SubCell"/>
</dbReference>
<dbReference type="GO" id="GO:0005524">
    <property type="term" value="F:ATP binding"/>
    <property type="evidence" value="ECO:0007669"/>
    <property type="project" value="UniProtKB-UniRule"/>
</dbReference>
<dbReference type="GO" id="GO:0004828">
    <property type="term" value="F:serine-tRNA ligase activity"/>
    <property type="evidence" value="ECO:0007669"/>
    <property type="project" value="UniProtKB-UniRule"/>
</dbReference>
<dbReference type="GO" id="GO:0016260">
    <property type="term" value="P:selenocysteine biosynthetic process"/>
    <property type="evidence" value="ECO:0007669"/>
    <property type="project" value="UniProtKB-UniRule"/>
</dbReference>
<dbReference type="GO" id="GO:0006434">
    <property type="term" value="P:seryl-tRNA aminoacylation"/>
    <property type="evidence" value="ECO:0007669"/>
    <property type="project" value="UniProtKB-UniRule"/>
</dbReference>
<dbReference type="CDD" id="cd00770">
    <property type="entry name" value="SerRS_core"/>
    <property type="match status" value="1"/>
</dbReference>
<dbReference type="Gene3D" id="3.30.930.10">
    <property type="entry name" value="Bira Bifunctional Protein, Domain 2"/>
    <property type="match status" value="1"/>
</dbReference>
<dbReference type="Gene3D" id="1.10.287.40">
    <property type="entry name" value="Serine-tRNA synthetase, tRNA binding domain"/>
    <property type="match status" value="1"/>
</dbReference>
<dbReference type="HAMAP" id="MF_00176">
    <property type="entry name" value="Ser_tRNA_synth_type1"/>
    <property type="match status" value="1"/>
</dbReference>
<dbReference type="InterPro" id="IPR002314">
    <property type="entry name" value="aa-tRNA-synt_IIb"/>
</dbReference>
<dbReference type="InterPro" id="IPR006195">
    <property type="entry name" value="aa-tRNA-synth_II"/>
</dbReference>
<dbReference type="InterPro" id="IPR045864">
    <property type="entry name" value="aa-tRNA-synth_II/BPL/LPL"/>
</dbReference>
<dbReference type="InterPro" id="IPR002317">
    <property type="entry name" value="Ser-tRNA-ligase_type_1"/>
</dbReference>
<dbReference type="InterPro" id="IPR015866">
    <property type="entry name" value="Ser-tRNA-synth_1_N"/>
</dbReference>
<dbReference type="InterPro" id="IPR042103">
    <property type="entry name" value="SerRS_1_N_sf"/>
</dbReference>
<dbReference type="InterPro" id="IPR033729">
    <property type="entry name" value="SerRS_core"/>
</dbReference>
<dbReference type="InterPro" id="IPR010978">
    <property type="entry name" value="tRNA-bd_arm"/>
</dbReference>
<dbReference type="NCBIfam" id="TIGR00414">
    <property type="entry name" value="serS"/>
    <property type="match status" value="1"/>
</dbReference>
<dbReference type="PANTHER" id="PTHR43697:SF1">
    <property type="entry name" value="SERINE--TRNA LIGASE"/>
    <property type="match status" value="1"/>
</dbReference>
<dbReference type="PANTHER" id="PTHR43697">
    <property type="entry name" value="SERYL-TRNA SYNTHETASE"/>
    <property type="match status" value="1"/>
</dbReference>
<dbReference type="Pfam" id="PF02403">
    <property type="entry name" value="Seryl_tRNA_N"/>
    <property type="match status" value="1"/>
</dbReference>
<dbReference type="Pfam" id="PF00587">
    <property type="entry name" value="tRNA-synt_2b"/>
    <property type="match status" value="1"/>
</dbReference>
<dbReference type="PIRSF" id="PIRSF001529">
    <property type="entry name" value="Ser-tRNA-synth_IIa"/>
    <property type="match status" value="1"/>
</dbReference>
<dbReference type="PRINTS" id="PR00981">
    <property type="entry name" value="TRNASYNTHSER"/>
</dbReference>
<dbReference type="SUPFAM" id="SSF55681">
    <property type="entry name" value="Class II aaRS and biotin synthetases"/>
    <property type="match status" value="1"/>
</dbReference>
<dbReference type="SUPFAM" id="SSF46589">
    <property type="entry name" value="tRNA-binding arm"/>
    <property type="match status" value="1"/>
</dbReference>
<dbReference type="PROSITE" id="PS50862">
    <property type="entry name" value="AA_TRNA_LIGASE_II"/>
    <property type="match status" value="1"/>
</dbReference>
<evidence type="ECO:0000255" key="1">
    <source>
        <dbReference type="HAMAP-Rule" id="MF_00176"/>
    </source>
</evidence>
<organism>
    <name type="scientific">Shewanella halifaxensis (strain HAW-EB4)</name>
    <dbReference type="NCBI Taxonomy" id="458817"/>
    <lineage>
        <taxon>Bacteria</taxon>
        <taxon>Pseudomonadati</taxon>
        <taxon>Pseudomonadota</taxon>
        <taxon>Gammaproteobacteria</taxon>
        <taxon>Alteromonadales</taxon>
        <taxon>Shewanellaceae</taxon>
        <taxon>Shewanella</taxon>
    </lineage>
</organism>
<accession>B0TUP4</accession>
<protein>
    <recommendedName>
        <fullName evidence="1">Serine--tRNA ligase</fullName>
        <ecNumber evidence="1">6.1.1.11</ecNumber>
    </recommendedName>
    <alternativeName>
        <fullName evidence="1">Seryl-tRNA synthetase</fullName>
        <shortName evidence="1">SerRS</shortName>
    </alternativeName>
    <alternativeName>
        <fullName evidence="1">Seryl-tRNA(Ser/Sec) synthetase</fullName>
    </alternativeName>
</protein>
<proteinExistence type="inferred from homology"/>
<sequence>MLDPKFLRNELEVTAERLATRGFILDVERLGKLEDKRKSLQVATEELQASRNAISKSIGQAKAKGEDVAPIMAQVGSLGEELDAKKAELASLLDELNSIAMSVPNLPDESAPIGADESENVEVRRWGTPKEYDFEVKDHVELGENIGGLDFKNAVKITGSRFIVMKGQIARMHRALAQFMLDLHTTEHGYTEAYVPLLVNEDSLMGTGQLPKFGEDLFHTKPATEEGQGLSLIPTAEVPLTNLVRDTIVDEEELPIKLTAHTPCFRSEAGSYGRDTRGLIRQHQFDKVELVQLVKPENSMQALEELTAHAETVLQKLGLPYRTVVLCTGDMGFGSSKTYDIEVWLPAQNTFREISSCSNMQDFQARRMQARYKAKTDKKPSLLHTLNGSGLAVGRTLVAVIENYQNADGSITVPEALRGYMGGLEKIG</sequence>
<name>SYS_SHEHH</name>
<feature type="chain" id="PRO_1000077214" description="Serine--tRNA ligase">
    <location>
        <begin position="1"/>
        <end position="428"/>
    </location>
</feature>
<feature type="binding site" evidence="1">
    <location>
        <begin position="235"/>
        <end position="237"/>
    </location>
    <ligand>
        <name>L-serine</name>
        <dbReference type="ChEBI" id="CHEBI:33384"/>
    </ligand>
</feature>
<feature type="binding site" evidence="1">
    <location>
        <begin position="266"/>
        <end position="268"/>
    </location>
    <ligand>
        <name>ATP</name>
        <dbReference type="ChEBI" id="CHEBI:30616"/>
    </ligand>
</feature>
<feature type="binding site" evidence="1">
    <location>
        <position position="289"/>
    </location>
    <ligand>
        <name>L-serine</name>
        <dbReference type="ChEBI" id="CHEBI:33384"/>
    </ligand>
</feature>
<feature type="binding site" evidence="1">
    <location>
        <begin position="353"/>
        <end position="356"/>
    </location>
    <ligand>
        <name>ATP</name>
        <dbReference type="ChEBI" id="CHEBI:30616"/>
    </ligand>
</feature>
<feature type="binding site" evidence="1">
    <location>
        <position position="389"/>
    </location>
    <ligand>
        <name>L-serine</name>
        <dbReference type="ChEBI" id="CHEBI:33384"/>
    </ligand>
</feature>
<keyword id="KW-0030">Aminoacyl-tRNA synthetase</keyword>
<keyword id="KW-0067">ATP-binding</keyword>
<keyword id="KW-0963">Cytoplasm</keyword>
<keyword id="KW-0436">Ligase</keyword>
<keyword id="KW-0547">Nucleotide-binding</keyword>
<keyword id="KW-0648">Protein biosynthesis</keyword>